<name>PYRF_KLEP3</name>
<protein>
    <recommendedName>
        <fullName evidence="1">Orotidine 5'-phosphate decarboxylase</fullName>
        <ecNumber evidence="1">4.1.1.23</ecNumber>
    </recommendedName>
    <alternativeName>
        <fullName evidence="1">OMP decarboxylase</fullName>
        <shortName evidence="1">OMPDCase</shortName>
        <shortName evidence="1">OMPdecase</shortName>
    </alternativeName>
</protein>
<keyword id="KW-0210">Decarboxylase</keyword>
<keyword id="KW-0456">Lyase</keyword>
<keyword id="KW-0665">Pyrimidine biosynthesis</keyword>
<sequence length="245" mass="26260">MTSTAITSSRAVTSSPVVVALDYDNRDKALAFVDRIDPRDCRLKVGKEMFTLLGPQFVRDLHQRGFEVFLDLKFHDIPNTTARAVAAAAELGVWMVNVHASGGARMMTAAREALLPFGKEAPLLIAVTVLTSMEASDLQDLGITLSPADYAAKLAALTQRCGLDGVVCSAQEAVRFKQEMGQAFKLVTPGIRPQGSEAGDQRRIMTPEQAQAAGVDYMVIGRPVTQSADPAATLRAINVSLSKEA</sequence>
<gene>
    <name evidence="1" type="primary">pyrF</name>
    <name type="ordered locus">KPK_3157</name>
</gene>
<organism>
    <name type="scientific">Klebsiella pneumoniae (strain 342)</name>
    <dbReference type="NCBI Taxonomy" id="507522"/>
    <lineage>
        <taxon>Bacteria</taxon>
        <taxon>Pseudomonadati</taxon>
        <taxon>Pseudomonadota</taxon>
        <taxon>Gammaproteobacteria</taxon>
        <taxon>Enterobacterales</taxon>
        <taxon>Enterobacteriaceae</taxon>
        <taxon>Klebsiella/Raoultella group</taxon>
        <taxon>Klebsiella</taxon>
        <taxon>Klebsiella pneumoniae complex</taxon>
    </lineage>
</organism>
<comment type="function">
    <text evidence="1">Catalyzes the decarboxylation of orotidine 5'-monophosphate (OMP) to uridine 5'-monophosphate (UMP).</text>
</comment>
<comment type="catalytic activity">
    <reaction evidence="1">
        <text>orotidine 5'-phosphate + H(+) = UMP + CO2</text>
        <dbReference type="Rhea" id="RHEA:11596"/>
        <dbReference type="ChEBI" id="CHEBI:15378"/>
        <dbReference type="ChEBI" id="CHEBI:16526"/>
        <dbReference type="ChEBI" id="CHEBI:57538"/>
        <dbReference type="ChEBI" id="CHEBI:57865"/>
        <dbReference type="EC" id="4.1.1.23"/>
    </reaction>
</comment>
<comment type="pathway">
    <text evidence="1">Pyrimidine metabolism; UMP biosynthesis via de novo pathway; UMP from orotate: step 2/2.</text>
</comment>
<comment type="subunit">
    <text evidence="1">Homodimer.</text>
</comment>
<comment type="similarity">
    <text evidence="1">Belongs to the OMP decarboxylase family. Type 1 subfamily.</text>
</comment>
<evidence type="ECO:0000255" key="1">
    <source>
        <dbReference type="HAMAP-Rule" id="MF_01200"/>
    </source>
</evidence>
<feature type="chain" id="PRO_1000138535" description="Orotidine 5'-phosphate decarboxylase">
    <location>
        <begin position="1"/>
        <end position="245"/>
    </location>
</feature>
<feature type="active site" description="Proton donor" evidence="1">
    <location>
        <position position="73"/>
    </location>
</feature>
<feature type="binding site" evidence="1">
    <location>
        <position position="22"/>
    </location>
    <ligand>
        <name>substrate</name>
    </ligand>
</feature>
<feature type="binding site" evidence="1">
    <location>
        <position position="44"/>
    </location>
    <ligand>
        <name>substrate</name>
    </ligand>
</feature>
<feature type="binding site" evidence="1">
    <location>
        <begin position="71"/>
        <end position="80"/>
    </location>
    <ligand>
        <name>substrate</name>
    </ligand>
</feature>
<feature type="binding site" evidence="1">
    <location>
        <position position="131"/>
    </location>
    <ligand>
        <name>substrate</name>
    </ligand>
</feature>
<feature type="binding site" evidence="1">
    <location>
        <position position="192"/>
    </location>
    <ligand>
        <name>substrate</name>
    </ligand>
</feature>
<feature type="binding site" evidence="1">
    <location>
        <position position="201"/>
    </location>
    <ligand>
        <name>substrate</name>
    </ligand>
</feature>
<feature type="binding site" evidence="1">
    <location>
        <position position="221"/>
    </location>
    <ligand>
        <name>substrate</name>
    </ligand>
</feature>
<feature type="binding site" evidence="1">
    <location>
        <position position="222"/>
    </location>
    <ligand>
        <name>substrate</name>
    </ligand>
</feature>
<dbReference type="EC" id="4.1.1.23" evidence="1"/>
<dbReference type="EMBL" id="CP000964">
    <property type="protein sequence ID" value="ACI11164.1"/>
    <property type="molecule type" value="Genomic_DNA"/>
</dbReference>
<dbReference type="SMR" id="B5XS09"/>
<dbReference type="KEGG" id="kpe:KPK_3157"/>
<dbReference type="HOGENOM" id="CLU_067069_0_0_6"/>
<dbReference type="UniPathway" id="UPA00070">
    <property type="reaction ID" value="UER00120"/>
</dbReference>
<dbReference type="Proteomes" id="UP000001734">
    <property type="component" value="Chromosome"/>
</dbReference>
<dbReference type="GO" id="GO:0005829">
    <property type="term" value="C:cytosol"/>
    <property type="evidence" value="ECO:0007669"/>
    <property type="project" value="TreeGrafter"/>
</dbReference>
<dbReference type="GO" id="GO:0004590">
    <property type="term" value="F:orotidine-5'-phosphate decarboxylase activity"/>
    <property type="evidence" value="ECO:0007669"/>
    <property type="project" value="UniProtKB-UniRule"/>
</dbReference>
<dbReference type="GO" id="GO:0006207">
    <property type="term" value="P:'de novo' pyrimidine nucleobase biosynthetic process"/>
    <property type="evidence" value="ECO:0007669"/>
    <property type="project" value="InterPro"/>
</dbReference>
<dbReference type="GO" id="GO:0044205">
    <property type="term" value="P:'de novo' UMP biosynthetic process"/>
    <property type="evidence" value="ECO:0007669"/>
    <property type="project" value="UniProtKB-UniRule"/>
</dbReference>
<dbReference type="CDD" id="cd04725">
    <property type="entry name" value="OMP_decarboxylase_like"/>
    <property type="match status" value="1"/>
</dbReference>
<dbReference type="FunFam" id="3.20.20.70:FF:000015">
    <property type="entry name" value="Orotidine 5'-phosphate decarboxylase"/>
    <property type="match status" value="1"/>
</dbReference>
<dbReference type="Gene3D" id="3.20.20.70">
    <property type="entry name" value="Aldolase class I"/>
    <property type="match status" value="1"/>
</dbReference>
<dbReference type="HAMAP" id="MF_01200_B">
    <property type="entry name" value="OMPdecase_type1_B"/>
    <property type="match status" value="1"/>
</dbReference>
<dbReference type="InterPro" id="IPR013785">
    <property type="entry name" value="Aldolase_TIM"/>
</dbReference>
<dbReference type="InterPro" id="IPR014732">
    <property type="entry name" value="OMPdecase"/>
</dbReference>
<dbReference type="InterPro" id="IPR018089">
    <property type="entry name" value="OMPdecase_AS"/>
</dbReference>
<dbReference type="InterPro" id="IPR047596">
    <property type="entry name" value="OMPdecase_bac"/>
</dbReference>
<dbReference type="InterPro" id="IPR001754">
    <property type="entry name" value="OMPdeCOase_dom"/>
</dbReference>
<dbReference type="InterPro" id="IPR011060">
    <property type="entry name" value="RibuloseP-bd_barrel"/>
</dbReference>
<dbReference type="NCBIfam" id="NF001273">
    <property type="entry name" value="PRK00230.1"/>
    <property type="match status" value="1"/>
</dbReference>
<dbReference type="NCBIfam" id="TIGR01740">
    <property type="entry name" value="pyrF"/>
    <property type="match status" value="1"/>
</dbReference>
<dbReference type="PANTHER" id="PTHR32119">
    <property type="entry name" value="OROTIDINE 5'-PHOSPHATE DECARBOXYLASE"/>
    <property type="match status" value="1"/>
</dbReference>
<dbReference type="PANTHER" id="PTHR32119:SF2">
    <property type="entry name" value="OROTIDINE 5'-PHOSPHATE DECARBOXYLASE"/>
    <property type="match status" value="1"/>
</dbReference>
<dbReference type="Pfam" id="PF00215">
    <property type="entry name" value="OMPdecase"/>
    <property type="match status" value="1"/>
</dbReference>
<dbReference type="SMART" id="SM00934">
    <property type="entry name" value="OMPdecase"/>
    <property type="match status" value="1"/>
</dbReference>
<dbReference type="SUPFAM" id="SSF51366">
    <property type="entry name" value="Ribulose-phoshate binding barrel"/>
    <property type="match status" value="1"/>
</dbReference>
<dbReference type="PROSITE" id="PS00156">
    <property type="entry name" value="OMPDECASE"/>
    <property type="match status" value="1"/>
</dbReference>
<accession>B5XS09</accession>
<proteinExistence type="inferred from homology"/>
<reference key="1">
    <citation type="journal article" date="2008" name="PLoS Genet.">
        <title>Complete genome sequence of the N2-fixing broad host range endophyte Klebsiella pneumoniae 342 and virulence predictions verified in mice.</title>
        <authorList>
            <person name="Fouts D.E."/>
            <person name="Tyler H.L."/>
            <person name="DeBoy R.T."/>
            <person name="Daugherty S."/>
            <person name="Ren Q."/>
            <person name="Badger J.H."/>
            <person name="Durkin A.S."/>
            <person name="Huot H."/>
            <person name="Shrivastava S."/>
            <person name="Kothari S."/>
            <person name="Dodson R.J."/>
            <person name="Mohamoud Y."/>
            <person name="Khouri H."/>
            <person name="Roesch L.F.W."/>
            <person name="Krogfelt K.A."/>
            <person name="Struve C."/>
            <person name="Triplett E.W."/>
            <person name="Methe B.A."/>
        </authorList>
    </citation>
    <scope>NUCLEOTIDE SEQUENCE [LARGE SCALE GENOMIC DNA]</scope>
    <source>
        <strain>342</strain>
    </source>
</reference>